<name>STX19_MOUSE</name>
<evidence type="ECO:0000255" key="1">
    <source>
        <dbReference type="PROSITE-ProRule" id="PRU00202"/>
    </source>
</evidence>
<evidence type="ECO:0000269" key="2">
    <source>
    </source>
</evidence>
<evidence type="ECO:0000303" key="3">
    <source>
    </source>
</evidence>
<evidence type="ECO:0000305" key="4"/>
<evidence type="ECO:0000312" key="5">
    <source>
        <dbReference type="MGI" id="MGI:1915409"/>
    </source>
</evidence>
<feature type="chain" id="PRO_0000263710" description="Syntaxin-19">
    <location>
        <begin position="1"/>
        <end position="292"/>
    </location>
</feature>
<feature type="domain" description="t-SNARE coiled-coil homology" evidence="1">
    <location>
        <begin position="207"/>
        <end position="269"/>
    </location>
</feature>
<feature type="sequence conflict" description="In Ref. 1; BAB32182." evidence="4" ref="1">
    <original>V</original>
    <variation>A</variation>
    <location>
        <position position="270"/>
    </location>
</feature>
<reference key="1">
    <citation type="journal article" date="2005" name="Science">
        <title>The transcriptional landscape of the mammalian genome.</title>
        <authorList>
            <person name="Carninci P."/>
            <person name="Kasukawa T."/>
            <person name="Katayama S."/>
            <person name="Gough J."/>
            <person name="Frith M.C."/>
            <person name="Maeda N."/>
            <person name="Oyama R."/>
            <person name="Ravasi T."/>
            <person name="Lenhard B."/>
            <person name="Wells C."/>
            <person name="Kodzius R."/>
            <person name="Shimokawa K."/>
            <person name="Bajic V.B."/>
            <person name="Brenner S.E."/>
            <person name="Batalov S."/>
            <person name="Forrest A.R."/>
            <person name="Zavolan M."/>
            <person name="Davis M.J."/>
            <person name="Wilming L.G."/>
            <person name="Aidinis V."/>
            <person name="Allen J.E."/>
            <person name="Ambesi-Impiombato A."/>
            <person name="Apweiler R."/>
            <person name="Aturaliya R.N."/>
            <person name="Bailey T.L."/>
            <person name="Bansal M."/>
            <person name="Baxter L."/>
            <person name="Beisel K.W."/>
            <person name="Bersano T."/>
            <person name="Bono H."/>
            <person name="Chalk A.M."/>
            <person name="Chiu K.P."/>
            <person name="Choudhary V."/>
            <person name="Christoffels A."/>
            <person name="Clutterbuck D.R."/>
            <person name="Crowe M.L."/>
            <person name="Dalla E."/>
            <person name="Dalrymple B.P."/>
            <person name="de Bono B."/>
            <person name="Della Gatta G."/>
            <person name="di Bernardo D."/>
            <person name="Down T."/>
            <person name="Engstrom P."/>
            <person name="Fagiolini M."/>
            <person name="Faulkner G."/>
            <person name="Fletcher C.F."/>
            <person name="Fukushima T."/>
            <person name="Furuno M."/>
            <person name="Futaki S."/>
            <person name="Gariboldi M."/>
            <person name="Georgii-Hemming P."/>
            <person name="Gingeras T.R."/>
            <person name="Gojobori T."/>
            <person name="Green R.E."/>
            <person name="Gustincich S."/>
            <person name="Harbers M."/>
            <person name="Hayashi Y."/>
            <person name="Hensch T.K."/>
            <person name="Hirokawa N."/>
            <person name="Hill D."/>
            <person name="Huminiecki L."/>
            <person name="Iacono M."/>
            <person name="Ikeo K."/>
            <person name="Iwama A."/>
            <person name="Ishikawa T."/>
            <person name="Jakt M."/>
            <person name="Kanapin A."/>
            <person name="Katoh M."/>
            <person name="Kawasawa Y."/>
            <person name="Kelso J."/>
            <person name="Kitamura H."/>
            <person name="Kitano H."/>
            <person name="Kollias G."/>
            <person name="Krishnan S.P."/>
            <person name="Kruger A."/>
            <person name="Kummerfeld S.K."/>
            <person name="Kurochkin I.V."/>
            <person name="Lareau L.F."/>
            <person name="Lazarevic D."/>
            <person name="Lipovich L."/>
            <person name="Liu J."/>
            <person name="Liuni S."/>
            <person name="McWilliam S."/>
            <person name="Madan Babu M."/>
            <person name="Madera M."/>
            <person name="Marchionni L."/>
            <person name="Matsuda H."/>
            <person name="Matsuzawa S."/>
            <person name="Miki H."/>
            <person name="Mignone F."/>
            <person name="Miyake S."/>
            <person name="Morris K."/>
            <person name="Mottagui-Tabar S."/>
            <person name="Mulder N."/>
            <person name="Nakano N."/>
            <person name="Nakauchi H."/>
            <person name="Ng P."/>
            <person name="Nilsson R."/>
            <person name="Nishiguchi S."/>
            <person name="Nishikawa S."/>
            <person name="Nori F."/>
            <person name="Ohara O."/>
            <person name="Okazaki Y."/>
            <person name="Orlando V."/>
            <person name="Pang K.C."/>
            <person name="Pavan W.J."/>
            <person name="Pavesi G."/>
            <person name="Pesole G."/>
            <person name="Petrovsky N."/>
            <person name="Piazza S."/>
            <person name="Reed J."/>
            <person name="Reid J.F."/>
            <person name="Ring B.Z."/>
            <person name="Ringwald M."/>
            <person name="Rost B."/>
            <person name="Ruan Y."/>
            <person name="Salzberg S.L."/>
            <person name="Sandelin A."/>
            <person name="Schneider C."/>
            <person name="Schoenbach C."/>
            <person name="Sekiguchi K."/>
            <person name="Semple C.A."/>
            <person name="Seno S."/>
            <person name="Sessa L."/>
            <person name="Sheng Y."/>
            <person name="Shibata Y."/>
            <person name="Shimada H."/>
            <person name="Shimada K."/>
            <person name="Silva D."/>
            <person name="Sinclair B."/>
            <person name="Sperling S."/>
            <person name="Stupka E."/>
            <person name="Sugiura K."/>
            <person name="Sultana R."/>
            <person name="Takenaka Y."/>
            <person name="Taki K."/>
            <person name="Tammoja K."/>
            <person name="Tan S.L."/>
            <person name="Tang S."/>
            <person name="Taylor M.S."/>
            <person name="Tegner J."/>
            <person name="Teichmann S.A."/>
            <person name="Ueda H.R."/>
            <person name="van Nimwegen E."/>
            <person name="Verardo R."/>
            <person name="Wei C.L."/>
            <person name="Yagi K."/>
            <person name="Yamanishi H."/>
            <person name="Zabarovsky E."/>
            <person name="Zhu S."/>
            <person name="Zimmer A."/>
            <person name="Hide W."/>
            <person name="Bult C."/>
            <person name="Grimmond S.M."/>
            <person name="Teasdale R.D."/>
            <person name="Liu E.T."/>
            <person name="Brusic V."/>
            <person name="Quackenbush J."/>
            <person name="Wahlestedt C."/>
            <person name="Mattick J.S."/>
            <person name="Hume D.A."/>
            <person name="Kai C."/>
            <person name="Sasaki D."/>
            <person name="Tomaru Y."/>
            <person name="Fukuda S."/>
            <person name="Kanamori-Katayama M."/>
            <person name="Suzuki M."/>
            <person name="Aoki J."/>
            <person name="Arakawa T."/>
            <person name="Iida J."/>
            <person name="Imamura K."/>
            <person name="Itoh M."/>
            <person name="Kato T."/>
            <person name="Kawaji H."/>
            <person name="Kawagashira N."/>
            <person name="Kawashima T."/>
            <person name="Kojima M."/>
            <person name="Kondo S."/>
            <person name="Konno H."/>
            <person name="Nakano K."/>
            <person name="Ninomiya N."/>
            <person name="Nishio T."/>
            <person name="Okada M."/>
            <person name="Plessy C."/>
            <person name="Shibata K."/>
            <person name="Shiraki T."/>
            <person name="Suzuki S."/>
            <person name="Tagami M."/>
            <person name="Waki K."/>
            <person name="Watahiki A."/>
            <person name="Okamura-Oho Y."/>
            <person name="Suzuki H."/>
            <person name="Kawai J."/>
            <person name="Hayashizaki Y."/>
        </authorList>
    </citation>
    <scope>NUCLEOTIDE SEQUENCE [LARGE SCALE MRNA]</scope>
    <source>
        <strain>C57BL/6J</strain>
        <tissue>Skin</tissue>
        <tissue>Tongue</tissue>
    </source>
</reference>
<reference key="2">
    <citation type="journal article" date="2004" name="Genome Res.">
        <title>The status, quality, and expansion of the NIH full-length cDNA project: the Mammalian Gene Collection (MGC).</title>
        <authorList>
            <consortium name="The MGC Project Team"/>
        </authorList>
    </citation>
    <scope>NUCLEOTIDE SEQUENCE [LARGE SCALE MRNA]</scope>
    <source>
        <strain>FVB/N</strain>
        <tissue>Mammary tumor</tissue>
    </source>
</reference>
<reference key="3">
    <citation type="journal article" date="2006" name="Traffic">
        <title>Syntaxin 9 is enriched in skin hair follicle epithelium and interacts with the epidermal growth factor receptor.</title>
        <authorList>
            <person name="Wang Y."/>
            <person name="Foo L.Y."/>
            <person name="Guo K."/>
            <person name="Gan B.Q."/>
            <person name="Zeng Q."/>
            <person name="Hong W."/>
            <person name="Tang B.L."/>
        </authorList>
    </citation>
    <scope>FUNCTION</scope>
    <scope>INTERACTION WITH EGFR</scope>
    <scope>SUBCELLULAR LOCATION</scope>
    <scope>TISSUE SPECIFICITY</scope>
    <scope>DEVELOPMENTAL STAGE</scope>
</reference>
<gene>
    <name evidence="5" type="primary">Stx19</name>
    <name evidence="3" type="synonym">Syn9</name>
</gene>
<comment type="function">
    <text evidence="2">Plays a role in endosomal trafficking of the epidermal growth factor receptor (EGFR).</text>
</comment>
<comment type="subunit">
    <text evidence="2">Interacts with EGFR.</text>
</comment>
<comment type="subcellular location">
    <subcellularLocation>
        <location evidence="2">Cell membrane</location>
        <topology evidence="4">Peripheral membrane protein</topology>
    </subcellularLocation>
    <subcellularLocation>
        <location evidence="2">Cytoplasm</location>
    </subcellularLocation>
</comment>
<comment type="tissue specificity">
    <text evidence="2">Expressed in stomach, lung and skin (at protein level). In stomach, strongly expressed in the mucosa of the fundus, in epithelial cells of gastric pits, and in gastric glands (at protein level). In skin, expressed in the epidermis, dermis, and epithelial layer of the hair bulb (at protein level).</text>
</comment>
<comment type="developmental stage">
    <text evidence="2">Detected in stomach and skin from embryonic stage 16 (16 dpc) onwards.</text>
</comment>
<comment type="similarity">
    <text evidence="4">Belongs to the syntaxin family.</text>
</comment>
<comment type="sequence caution" evidence="4">
    <conflict type="frameshift">
        <sequence resource="EMBL-CDS" id="BAB26492"/>
    </conflict>
</comment>
<dbReference type="EMBL" id="AK009770">
    <property type="protein sequence ID" value="BAB26492.1"/>
    <property type="status" value="ALT_FRAME"/>
    <property type="molecule type" value="mRNA"/>
</dbReference>
<dbReference type="EMBL" id="AK020701">
    <property type="protein sequence ID" value="BAB32182.3"/>
    <property type="molecule type" value="mRNA"/>
</dbReference>
<dbReference type="EMBL" id="BC023414">
    <property type="protein sequence ID" value="AAH23414.1"/>
    <property type="molecule type" value="mRNA"/>
</dbReference>
<dbReference type="CCDS" id="CCDS28262.1"/>
<dbReference type="RefSeq" id="NP_080864.1">
    <property type="nucleotide sequence ID" value="NM_026588.1"/>
</dbReference>
<dbReference type="SMR" id="Q8R1Q0"/>
<dbReference type="BioGRID" id="212688">
    <property type="interactions" value="2"/>
</dbReference>
<dbReference type="FunCoup" id="Q8R1Q0">
    <property type="interactions" value="144"/>
</dbReference>
<dbReference type="STRING" id="10090.ENSMUSP00000055901"/>
<dbReference type="PhosphoSitePlus" id="Q8R1Q0"/>
<dbReference type="PaxDb" id="10090-ENSMUSP00000055901"/>
<dbReference type="ProteomicsDB" id="257471"/>
<dbReference type="Antibodypedia" id="32081">
    <property type="antibodies" value="121 antibodies from 19 providers"/>
</dbReference>
<dbReference type="DNASU" id="68159"/>
<dbReference type="Ensembl" id="ENSMUST00000055557.6">
    <property type="protein sequence ID" value="ENSMUSP00000055901.6"/>
    <property type="gene ID" value="ENSMUSG00000047854.6"/>
</dbReference>
<dbReference type="GeneID" id="68159"/>
<dbReference type="KEGG" id="mmu:68159"/>
<dbReference type="UCSC" id="uc007zpv.1">
    <property type="organism name" value="mouse"/>
</dbReference>
<dbReference type="AGR" id="MGI:1915409"/>
<dbReference type="CTD" id="415117"/>
<dbReference type="MGI" id="MGI:1915409">
    <property type="gene designation" value="Stx19"/>
</dbReference>
<dbReference type="VEuPathDB" id="HostDB:ENSMUSG00000047854"/>
<dbReference type="eggNOG" id="KOG0810">
    <property type="taxonomic scope" value="Eukaryota"/>
</dbReference>
<dbReference type="GeneTree" id="ENSGT01050000244948"/>
<dbReference type="HOGENOM" id="CLU_042423_2_0_1"/>
<dbReference type="InParanoid" id="Q8R1Q0"/>
<dbReference type="OMA" id="CKAICCW"/>
<dbReference type="OrthoDB" id="10255013at2759"/>
<dbReference type="PhylomeDB" id="Q8R1Q0"/>
<dbReference type="TreeFam" id="TF313763"/>
<dbReference type="BioGRID-ORCS" id="68159">
    <property type="hits" value="3 hits in 76 CRISPR screens"/>
</dbReference>
<dbReference type="PRO" id="PR:Q8R1Q0"/>
<dbReference type="Proteomes" id="UP000000589">
    <property type="component" value="Chromosome 16"/>
</dbReference>
<dbReference type="RNAct" id="Q8R1Q0">
    <property type="molecule type" value="protein"/>
</dbReference>
<dbReference type="Bgee" id="ENSMUSG00000047854">
    <property type="expression patterns" value="Expressed in epithelium of stomach and 40 other cell types or tissues"/>
</dbReference>
<dbReference type="GO" id="GO:0005737">
    <property type="term" value="C:cytoplasm"/>
    <property type="evidence" value="ECO:0007669"/>
    <property type="project" value="UniProtKB-SubCell"/>
</dbReference>
<dbReference type="GO" id="GO:0005886">
    <property type="term" value="C:plasma membrane"/>
    <property type="evidence" value="ECO:0007669"/>
    <property type="project" value="UniProtKB-SubCell"/>
</dbReference>
<dbReference type="GO" id="GO:0005484">
    <property type="term" value="F:SNAP receptor activity"/>
    <property type="evidence" value="ECO:0007669"/>
    <property type="project" value="InterPro"/>
</dbReference>
<dbReference type="GO" id="GO:0006886">
    <property type="term" value="P:intracellular protein transport"/>
    <property type="evidence" value="ECO:0007669"/>
    <property type="project" value="InterPro"/>
</dbReference>
<dbReference type="GO" id="GO:0016192">
    <property type="term" value="P:vesicle-mediated transport"/>
    <property type="evidence" value="ECO:0007669"/>
    <property type="project" value="InterPro"/>
</dbReference>
<dbReference type="CDD" id="cd00179">
    <property type="entry name" value="SynN"/>
    <property type="match status" value="1"/>
</dbReference>
<dbReference type="FunFam" id="1.20.5.110:FF:000022">
    <property type="entry name" value="Syntaxin 19"/>
    <property type="match status" value="1"/>
</dbReference>
<dbReference type="FunFam" id="1.20.58.70:FF:000017">
    <property type="entry name" value="Syntaxin 19"/>
    <property type="match status" value="1"/>
</dbReference>
<dbReference type="Gene3D" id="1.20.5.110">
    <property type="match status" value="1"/>
</dbReference>
<dbReference type="Gene3D" id="1.20.58.70">
    <property type="match status" value="1"/>
</dbReference>
<dbReference type="InterPro" id="IPR010989">
    <property type="entry name" value="SNARE"/>
</dbReference>
<dbReference type="InterPro" id="IPR045242">
    <property type="entry name" value="Syntaxin"/>
</dbReference>
<dbReference type="InterPro" id="IPR006012">
    <property type="entry name" value="Syntaxin/epimorphin_CS"/>
</dbReference>
<dbReference type="InterPro" id="IPR006011">
    <property type="entry name" value="Syntaxin_N"/>
</dbReference>
<dbReference type="InterPro" id="IPR000727">
    <property type="entry name" value="T_SNARE_dom"/>
</dbReference>
<dbReference type="PANTHER" id="PTHR19957">
    <property type="entry name" value="SYNTAXIN"/>
    <property type="match status" value="1"/>
</dbReference>
<dbReference type="PANTHER" id="PTHR19957:SF29">
    <property type="entry name" value="SYNTAXIN-19"/>
    <property type="match status" value="1"/>
</dbReference>
<dbReference type="Pfam" id="PF00804">
    <property type="entry name" value="Syntaxin"/>
    <property type="match status" value="1"/>
</dbReference>
<dbReference type="SMART" id="SM00397">
    <property type="entry name" value="t_SNARE"/>
    <property type="match status" value="1"/>
</dbReference>
<dbReference type="SUPFAM" id="SSF47661">
    <property type="entry name" value="t-snare proteins"/>
    <property type="match status" value="1"/>
</dbReference>
<dbReference type="PROSITE" id="PS00914">
    <property type="entry name" value="SYNTAXIN"/>
    <property type="match status" value="1"/>
</dbReference>
<dbReference type="PROSITE" id="PS50192">
    <property type="entry name" value="T_SNARE"/>
    <property type="match status" value="1"/>
</dbReference>
<keyword id="KW-1003">Cell membrane</keyword>
<keyword id="KW-0175">Coiled coil</keyword>
<keyword id="KW-0963">Cytoplasm</keyword>
<keyword id="KW-0472">Membrane</keyword>
<keyword id="KW-1185">Reference proteome</keyword>
<keyword id="KW-0813">Transport</keyword>
<accession>Q8R1Q0</accession>
<accession>Q9CTR6</accession>
<accession>Q9CV39</accession>
<organism>
    <name type="scientific">Mus musculus</name>
    <name type="common">Mouse</name>
    <dbReference type="NCBI Taxonomy" id="10090"/>
    <lineage>
        <taxon>Eukaryota</taxon>
        <taxon>Metazoa</taxon>
        <taxon>Chordata</taxon>
        <taxon>Craniata</taxon>
        <taxon>Vertebrata</taxon>
        <taxon>Euteleostomi</taxon>
        <taxon>Mammalia</taxon>
        <taxon>Eutheria</taxon>
        <taxon>Euarchontoglires</taxon>
        <taxon>Glires</taxon>
        <taxon>Rodentia</taxon>
        <taxon>Myomorpha</taxon>
        <taxon>Muroidea</taxon>
        <taxon>Muridae</taxon>
        <taxon>Murinae</taxon>
        <taxon>Mus</taxon>
        <taxon>Mus</taxon>
    </lineage>
</organism>
<protein>
    <recommendedName>
        <fullName evidence="5">Syntaxin-19</fullName>
    </recommendedName>
    <alternativeName>
        <fullName evidence="3">Syntaxin-9</fullName>
    </alternativeName>
</protein>
<proteinExistence type="evidence at protein level"/>
<sequence>MKDRLQELKQKTKEIELSRDGQVFVEEEQGVLVQQAVIYEREPVAERHLHEIQKLQENINSFVDDVQRFGQQQKSLVASMRRFSLLKRDSTIAKEIKIQAEHINRALGDVVKEVKKSEVENGPSSVVTRILKSQYAAMFRRFQQTMFLYNDTIALKQEKCKTFIVRQLEVAGKEVSEEEVNDMLHHGKWEVFNESLLTETSITKAQLSEIEQRHKELVNLENQVKDLRDLFIQISLLVEEQGESINSIEVMVNSTKDYVNNTKEKFGLAVKYKKRNPCRALCCCCCPRCGSK</sequence>